<dbReference type="EC" id="5.6.1.7" evidence="1"/>
<dbReference type="EMBL" id="CP001055">
    <property type="protein sequence ID" value="ACC98477.1"/>
    <property type="molecule type" value="Genomic_DNA"/>
</dbReference>
<dbReference type="RefSeq" id="WP_012415092.1">
    <property type="nucleotide sequence ID" value="NC_010644.1"/>
</dbReference>
<dbReference type="SMR" id="B2KD81"/>
<dbReference type="STRING" id="445932.Emin_0924"/>
<dbReference type="KEGG" id="emi:Emin_0924"/>
<dbReference type="HOGENOM" id="CLU_016503_3_0_0"/>
<dbReference type="OrthoDB" id="9766614at2"/>
<dbReference type="Proteomes" id="UP000001029">
    <property type="component" value="Chromosome"/>
</dbReference>
<dbReference type="GO" id="GO:0005737">
    <property type="term" value="C:cytoplasm"/>
    <property type="evidence" value="ECO:0007669"/>
    <property type="project" value="UniProtKB-SubCell"/>
</dbReference>
<dbReference type="GO" id="GO:0005524">
    <property type="term" value="F:ATP binding"/>
    <property type="evidence" value="ECO:0007669"/>
    <property type="project" value="UniProtKB-UniRule"/>
</dbReference>
<dbReference type="GO" id="GO:0140662">
    <property type="term" value="F:ATP-dependent protein folding chaperone"/>
    <property type="evidence" value="ECO:0007669"/>
    <property type="project" value="InterPro"/>
</dbReference>
<dbReference type="GO" id="GO:0016853">
    <property type="term" value="F:isomerase activity"/>
    <property type="evidence" value="ECO:0007669"/>
    <property type="project" value="UniProtKB-KW"/>
</dbReference>
<dbReference type="GO" id="GO:0051082">
    <property type="term" value="F:unfolded protein binding"/>
    <property type="evidence" value="ECO:0007669"/>
    <property type="project" value="UniProtKB-UniRule"/>
</dbReference>
<dbReference type="GO" id="GO:0042026">
    <property type="term" value="P:protein refolding"/>
    <property type="evidence" value="ECO:0007669"/>
    <property type="project" value="UniProtKB-UniRule"/>
</dbReference>
<dbReference type="CDD" id="cd03344">
    <property type="entry name" value="GroEL"/>
    <property type="match status" value="1"/>
</dbReference>
<dbReference type="FunFam" id="3.50.7.10:FF:000001">
    <property type="entry name" value="60 kDa chaperonin"/>
    <property type="match status" value="1"/>
</dbReference>
<dbReference type="Gene3D" id="3.50.7.10">
    <property type="entry name" value="GroEL"/>
    <property type="match status" value="1"/>
</dbReference>
<dbReference type="Gene3D" id="1.10.560.10">
    <property type="entry name" value="GroEL-like equatorial domain"/>
    <property type="match status" value="1"/>
</dbReference>
<dbReference type="Gene3D" id="3.30.260.10">
    <property type="entry name" value="TCP-1-like chaperonin intermediate domain"/>
    <property type="match status" value="1"/>
</dbReference>
<dbReference type="HAMAP" id="MF_00600">
    <property type="entry name" value="CH60"/>
    <property type="match status" value="1"/>
</dbReference>
<dbReference type="InterPro" id="IPR001844">
    <property type="entry name" value="Cpn60/GroEL"/>
</dbReference>
<dbReference type="InterPro" id="IPR002423">
    <property type="entry name" value="Cpn60/GroEL/TCP-1"/>
</dbReference>
<dbReference type="InterPro" id="IPR027409">
    <property type="entry name" value="GroEL-like_apical_dom_sf"/>
</dbReference>
<dbReference type="InterPro" id="IPR027413">
    <property type="entry name" value="GROEL-like_equatorial_sf"/>
</dbReference>
<dbReference type="InterPro" id="IPR027410">
    <property type="entry name" value="TCP-1-like_intermed_sf"/>
</dbReference>
<dbReference type="NCBIfam" id="TIGR02348">
    <property type="entry name" value="GroEL"/>
    <property type="match status" value="1"/>
</dbReference>
<dbReference type="NCBIfam" id="NF000592">
    <property type="entry name" value="PRK00013.1"/>
    <property type="match status" value="1"/>
</dbReference>
<dbReference type="NCBIfam" id="NF009487">
    <property type="entry name" value="PRK12849.1"/>
    <property type="match status" value="1"/>
</dbReference>
<dbReference type="NCBIfam" id="NF009488">
    <property type="entry name" value="PRK12850.1"/>
    <property type="match status" value="1"/>
</dbReference>
<dbReference type="NCBIfam" id="NF009489">
    <property type="entry name" value="PRK12851.1"/>
    <property type="match status" value="1"/>
</dbReference>
<dbReference type="PANTHER" id="PTHR45633">
    <property type="entry name" value="60 KDA HEAT SHOCK PROTEIN, MITOCHONDRIAL"/>
    <property type="match status" value="1"/>
</dbReference>
<dbReference type="Pfam" id="PF00118">
    <property type="entry name" value="Cpn60_TCP1"/>
    <property type="match status" value="1"/>
</dbReference>
<dbReference type="PRINTS" id="PR00298">
    <property type="entry name" value="CHAPERONIN60"/>
</dbReference>
<dbReference type="SUPFAM" id="SSF52029">
    <property type="entry name" value="GroEL apical domain-like"/>
    <property type="match status" value="1"/>
</dbReference>
<dbReference type="SUPFAM" id="SSF48592">
    <property type="entry name" value="GroEL equatorial domain-like"/>
    <property type="match status" value="1"/>
</dbReference>
<dbReference type="SUPFAM" id="SSF54849">
    <property type="entry name" value="GroEL-intermediate domain like"/>
    <property type="match status" value="1"/>
</dbReference>
<name>CH60_ELUMP</name>
<reference key="1">
    <citation type="journal article" date="2009" name="Appl. Environ. Microbiol.">
        <title>Genomic analysis of 'Elusimicrobium minutum,' the first cultivated representative of the phylum 'Elusimicrobia' (formerly termite group 1).</title>
        <authorList>
            <person name="Herlemann D.P.R."/>
            <person name="Geissinger O."/>
            <person name="Ikeda-Ohtsubo W."/>
            <person name="Kunin V."/>
            <person name="Sun H."/>
            <person name="Lapidus A."/>
            <person name="Hugenholtz P."/>
            <person name="Brune A."/>
        </authorList>
    </citation>
    <scope>NUCLEOTIDE SEQUENCE [LARGE SCALE GENOMIC DNA]</scope>
    <source>
        <strain>Pei191</strain>
    </source>
</reference>
<gene>
    <name evidence="1" type="primary">groEL</name>
    <name evidence="1" type="synonym">groL</name>
    <name type="ordered locus">Emin_0924</name>
</gene>
<feature type="chain" id="PRO_1000130014" description="Chaperonin GroEL">
    <location>
        <begin position="1"/>
        <end position="542"/>
    </location>
</feature>
<feature type="binding site" evidence="1">
    <location>
        <begin position="29"/>
        <end position="32"/>
    </location>
    <ligand>
        <name>ATP</name>
        <dbReference type="ChEBI" id="CHEBI:30616"/>
    </ligand>
</feature>
<feature type="binding site" evidence="1">
    <location>
        <begin position="86"/>
        <end position="90"/>
    </location>
    <ligand>
        <name>ATP</name>
        <dbReference type="ChEBI" id="CHEBI:30616"/>
    </ligand>
</feature>
<feature type="binding site" evidence="1">
    <location>
        <position position="413"/>
    </location>
    <ligand>
        <name>ATP</name>
        <dbReference type="ChEBI" id="CHEBI:30616"/>
    </ligand>
</feature>
<feature type="binding site" evidence="1">
    <location>
        <position position="493"/>
    </location>
    <ligand>
        <name>ATP</name>
        <dbReference type="ChEBI" id="CHEBI:30616"/>
    </ligand>
</feature>
<comment type="function">
    <text evidence="1">Together with its co-chaperonin GroES, plays an essential role in assisting protein folding. The GroEL-GroES system forms a nano-cage that allows encapsulation of the non-native substrate proteins and provides a physical environment optimized to promote and accelerate protein folding.</text>
</comment>
<comment type="catalytic activity">
    <reaction evidence="1">
        <text>ATP + H2O + a folded polypeptide = ADP + phosphate + an unfolded polypeptide.</text>
        <dbReference type="EC" id="5.6.1.7"/>
    </reaction>
</comment>
<comment type="subunit">
    <text evidence="1">Forms a cylinder of 14 subunits composed of two heptameric rings stacked back-to-back. Interacts with the co-chaperonin GroES.</text>
</comment>
<comment type="subcellular location">
    <subcellularLocation>
        <location evidence="1">Cytoplasm</location>
    </subcellularLocation>
</comment>
<comment type="similarity">
    <text evidence="1">Belongs to the chaperonin (HSP60) family.</text>
</comment>
<organism>
    <name type="scientific">Elusimicrobium minutum (strain Pei191)</name>
    <dbReference type="NCBI Taxonomy" id="445932"/>
    <lineage>
        <taxon>Bacteria</taxon>
        <taxon>Pseudomonadati</taxon>
        <taxon>Elusimicrobiota</taxon>
        <taxon>Elusimicrobia</taxon>
        <taxon>Elusimicrobiales</taxon>
        <taxon>Elusimicrobiaceae</taxon>
        <taxon>Elusimicrobium</taxon>
    </lineage>
</organism>
<accession>B2KD81</accession>
<evidence type="ECO:0000255" key="1">
    <source>
        <dbReference type="HAMAP-Rule" id="MF_00600"/>
    </source>
</evidence>
<proteinExistence type="inferred from homology"/>
<protein>
    <recommendedName>
        <fullName evidence="1">Chaperonin GroEL</fullName>
        <ecNumber evidence="1">5.6.1.7</ecNumber>
    </recommendedName>
    <alternativeName>
        <fullName evidence="1">60 kDa chaperonin</fullName>
    </alternativeName>
    <alternativeName>
        <fullName evidence="1">Chaperonin-60</fullName>
        <shortName evidence="1">Cpn60</shortName>
    </alternativeName>
</protein>
<keyword id="KW-0067">ATP-binding</keyword>
<keyword id="KW-0143">Chaperone</keyword>
<keyword id="KW-0963">Cytoplasm</keyword>
<keyword id="KW-0413">Isomerase</keyword>
<keyword id="KW-0547">Nucleotide-binding</keyword>
<keyword id="KW-1185">Reference proteome</keyword>
<sequence length="542" mass="57622">MAKQIVYGDEARAKMKAGIEKVAKAVSVTLGPKGRSVVLEKKFGSPLIIDDGVTIAKDIELEDKFENMGAQLIREVASKTNDIAGDGTTTATVLTHAILTEGIKNITAGANPTLVKKGIEMAVETVKEELKKMQRPVETKEEKAQIATISANDRMVGELIAEAMEKVGHEGVITVEEGKTATTELQVVEGMQFDRGYISPYFVTDSERMECVLEDCQIILADKKVSSMNELLPLLEGIVKNGRNFLIIAEDVDGEALATLVVNRLRGTLKGCAVKAPGFGDRRKEMLEDIAILTGGQVIAEERGMKLETATLDMLGSAKRVVIDKENATIVSGEGDKKKIEARAEQIRKQIENSTSDYDKEKLQERLAKLSGGVAVISVGAATETEMKAKKAKVEDAKNATKAGVEEGLIPGGGVALTRCEGAVGKLKADNEDVQTGINIVKKALTAPLYQIAFNAGLDGSVVVENVRNAKGNQGFDADTGEYVDMIKAGVVDAVKVVRIGLENAASIAATVLLTEALVADIPEEKGAAPMGHPGMGGMGMM</sequence>